<proteinExistence type="evidence at protein level"/>
<feature type="chain" id="PRO_0000192637" description="Chlorosome envelope protein B">
    <location>
        <begin position="1"/>
        <end position="74"/>
    </location>
</feature>
<feature type="chain" id="PRO_0000293488" description="Chlorosome envelope protein B, short form">
    <location>
        <begin position="2"/>
        <end position="74"/>
    </location>
</feature>
<feature type="repeat" description="1">
    <location>
        <begin position="7"/>
        <end position="16"/>
    </location>
</feature>
<feature type="repeat" description="2">
    <location>
        <begin position="28"/>
        <end position="38"/>
    </location>
</feature>
<feature type="repeat" description="3">
    <location>
        <begin position="39"/>
        <end position="49"/>
    </location>
</feature>
<feature type="repeat" description="4">
    <location>
        <begin position="50"/>
        <end position="60"/>
    </location>
</feature>
<feature type="region of interest" description="4 X approximate repeats">
    <location>
        <begin position="7"/>
        <end position="60"/>
    </location>
</feature>
<feature type="modified residue" description="Blocked amino end (Asn); in short form">
    <location>
        <position position="2"/>
    </location>
</feature>
<accession>P15523</accession>
<evidence type="ECO:0000305" key="1"/>
<reference key="1">
    <citation type="journal article" date="1991" name="Biochim. Biophys. Acta">
        <title>The amino acid sequence of a major protein component in the light harvesting complex of the green photosynthetic bacterium Chlorobium limicola f. thiosulfatophilum.</title>
        <authorList>
            <person name="Hoejrup P."/>
            <person name="Gerola P."/>
            <person name="Hansen H.F."/>
            <person name="Mikkelsen J.M."/>
            <person name="Shaded A.E."/>
            <person name="Knudsen J."/>
            <person name="Roepstorff P."/>
            <person name="Olson J.M."/>
        </authorList>
    </citation>
    <scope>PROTEIN SEQUENCE</scope>
</reference>
<reference key="2">
    <citation type="journal article" date="1988" name="FEBS Lett.">
        <title>The BChlc/e-binding polypeptides from chlorosomes of green photosynthetic bacteria.</title>
        <authorList>
            <person name="Wagner-Huber R."/>
            <person name="Brunisholz R."/>
            <person name="Frank G."/>
            <person name="Zuber H."/>
        </authorList>
    </citation>
    <scope>PROTEIN SEQUENCE</scope>
    <source>
        <strain>DSM 249 / 6230 / Tassajara</strain>
    </source>
</reference>
<dbReference type="PIR" id="S05564">
    <property type="entry name" value="S05564"/>
</dbReference>
<dbReference type="PIR" id="S14729">
    <property type="entry name" value="S14729"/>
</dbReference>
<dbReference type="SMR" id="P15523"/>
<dbReference type="GO" id="GO:0033105">
    <property type="term" value="C:chlorosome envelope"/>
    <property type="evidence" value="ECO:0007669"/>
    <property type="project" value="UniProtKB-SubCell"/>
</dbReference>
<dbReference type="GO" id="GO:0042314">
    <property type="term" value="F:bacteriochlorophyll binding"/>
    <property type="evidence" value="ECO:0007669"/>
    <property type="project" value="UniProtKB-KW"/>
</dbReference>
<dbReference type="GO" id="GO:0015979">
    <property type="term" value="P:photosynthesis"/>
    <property type="evidence" value="ECO:0007669"/>
    <property type="project" value="UniProtKB-KW"/>
</dbReference>
<protein>
    <recommendedName>
        <fullName>Chlorosome envelope protein B</fullName>
    </recommendedName>
    <alternativeName>
        <fullName>Chlorosome 7.5 kDa protein</fullName>
    </alternativeName>
    <alternativeName>
        <fullName>Gerola-Olson chlorosome protein</fullName>
    </alternativeName>
    <component>
        <recommendedName>
            <fullName>Chlorosome envelope protein B, short form</fullName>
        </recommendedName>
    </component>
</protein>
<keyword id="KW-0076">Bacteriochlorophyll</keyword>
<keyword id="KW-0148">Chlorophyll</keyword>
<keyword id="KW-0151">Chlorosome</keyword>
<keyword id="KW-0157">Chromophore</keyword>
<keyword id="KW-0903">Direct protein sequencing</keyword>
<keyword id="KW-0602">Photosynthesis</keyword>
<keyword id="KW-0677">Repeat</keyword>
<organism>
    <name type="scientific">Chlorobaculum thiosulfatiphilum</name>
    <name type="common">Chlorobium limicola f.sp. thiosulfatophilum</name>
    <dbReference type="NCBI Taxonomy" id="115852"/>
    <lineage>
        <taxon>Bacteria</taxon>
        <taxon>Pseudomonadati</taxon>
        <taxon>Chlorobiota</taxon>
        <taxon>Chlorobiia</taxon>
        <taxon>Chlorobiales</taxon>
        <taxon>Chlorobiaceae</taxon>
        <taxon>Chlorobaculum</taxon>
    </lineage>
</organism>
<comment type="function">
    <text>Component of the photosynthetic apparatus which may bind the chlorosome to the bacteriochlorophyll a protein monolayer.</text>
</comment>
<comment type="subcellular location">
    <subcellularLocation>
        <location>Chlorosome</location>
        <location>Chlorosome envelope</location>
    </subcellularLocation>
</comment>
<comment type="PTM">
    <text>A short form lacking first Ser is produced.</text>
</comment>
<comment type="similarity">
    <text evidence="1">Belongs to the CsmB/CsmF family.</text>
</comment>
<name>CSMB_CHLTI</name>
<sequence>SNGTNIDVAGAINTLTETFGKLFQMQLDVANTALKALADVAEPLGKTATDLVGNFAGAATQILQSVSAAIAPKK</sequence>
<gene>
    <name type="primary">csmB</name>
</gene>